<feature type="chain" id="PRO_0000168035" description="Small ribosomal subunit protein bS20">
    <location>
        <begin position="1"/>
        <end position="78"/>
    </location>
</feature>
<evidence type="ECO:0000255" key="1">
    <source>
        <dbReference type="HAMAP-Rule" id="MF_00500"/>
    </source>
</evidence>
<evidence type="ECO:0000305" key="2"/>
<accession>Q97RH7</accession>
<proteinExistence type="inferred from homology"/>
<dbReference type="EMBL" id="AE005672">
    <property type="protein sequence ID" value="AAK74969.1"/>
    <property type="molecule type" value="Genomic_DNA"/>
</dbReference>
<dbReference type="PIR" id="H95096">
    <property type="entry name" value="H95096"/>
</dbReference>
<dbReference type="RefSeq" id="WP_001274002.1">
    <property type="nucleotide sequence ID" value="NZ_CP155539.1"/>
</dbReference>
<dbReference type="SMR" id="Q97RH7"/>
<dbReference type="PaxDb" id="170187-SP_0838"/>
<dbReference type="EnsemblBacteria" id="AAK74969">
    <property type="protein sequence ID" value="AAK74969"/>
    <property type="gene ID" value="SP_0838"/>
</dbReference>
<dbReference type="KEGG" id="spn:SP_0838"/>
<dbReference type="eggNOG" id="COG0268">
    <property type="taxonomic scope" value="Bacteria"/>
</dbReference>
<dbReference type="PhylomeDB" id="Q97RH7"/>
<dbReference type="Proteomes" id="UP000000585">
    <property type="component" value="Chromosome"/>
</dbReference>
<dbReference type="GO" id="GO:0005829">
    <property type="term" value="C:cytosol"/>
    <property type="evidence" value="ECO:0007669"/>
    <property type="project" value="TreeGrafter"/>
</dbReference>
<dbReference type="GO" id="GO:0015935">
    <property type="term" value="C:small ribosomal subunit"/>
    <property type="evidence" value="ECO:0007669"/>
    <property type="project" value="TreeGrafter"/>
</dbReference>
<dbReference type="GO" id="GO:0070181">
    <property type="term" value="F:small ribosomal subunit rRNA binding"/>
    <property type="evidence" value="ECO:0007669"/>
    <property type="project" value="TreeGrafter"/>
</dbReference>
<dbReference type="GO" id="GO:0003735">
    <property type="term" value="F:structural constituent of ribosome"/>
    <property type="evidence" value="ECO:0007669"/>
    <property type="project" value="InterPro"/>
</dbReference>
<dbReference type="GO" id="GO:0006412">
    <property type="term" value="P:translation"/>
    <property type="evidence" value="ECO:0007669"/>
    <property type="project" value="UniProtKB-UniRule"/>
</dbReference>
<dbReference type="FunFam" id="1.20.58.110:FF:000001">
    <property type="entry name" value="30S ribosomal protein S20"/>
    <property type="match status" value="1"/>
</dbReference>
<dbReference type="Gene3D" id="1.20.58.110">
    <property type="entry name" value="Ribosomal protein S20"/>
    <property type="match status" value="1"/>
</dbReference>
<dbReference type="HAMAP" id="MF_00500">
    <property type="entry name" value="Ribosomal_bS20"/>
    <property type="match status" value="1"/>
</dbReference>
<dbReference type="InterPro" id="IPR002583">
    <property type="entry name" value="Ribosomal_bS20"/>
</dbReference>
<dbReference type="InterPro" id="IPR036510">
    <property type="entry name" value="Ribosomal_bS20_sf"/>
</dbReference>
<dbReference type="NCBIfam" id="TIGR00029">
    <property type="entry name" value="S20"/>
    <property type="match status" value="1"/>
</dbReference>
<dbReference type="PANTHER" id="PTHR33398">
    <property type="entry name" value="30S RIBOSOMAL PROTEIN S20"/>
    <property type="match status" value="1"/>
</dbReference>
<dbReference type="PANTHER" id="PTHR33398:SF1">
    <property type="entry name" value="SMALL RIBOSOMAL SUBUNIT PROTEIN BS20C"/>
    <property type="match status" value="1"/>
</dbReference>
<dbReference type="Pfam" id="PF01649">
    <property type="entry name" value="Ribosomal_S20p"/>
    <property type="match status" value="1"/>
</dbReference>
<dbReference type="SUPFAM" id="SSF46992">
    <property type="entry name" value="Ribosomal protein S20"/>
    <property type="match status" value="1"/>
</dbReference>
<organism>
    <name type="scientific">Streptococcus pneumoniae serotype 4 (strain ATCC BAA-334 / TIGR4)</name>
    <dbReference type="NCBI Taxonomy" id="170187"/>
    <lineage>
        <taxon>Bacteria</taxon>
        <taxon>Bacillati</taxon>
        <taxon>Bacillota</taxon>
        <taxon>Bacilli</taxon>
        <taxon>Lactobacillales</taxon>
        <taxon>Streptococcaceae</taxon>
        <taxon>Streptococcus</taxon>
    </lineage>
</organism>
<protein>
    <recommendedName>
        <fullName evidence="1">Small ribosomal subunit protein bS20</fullName>
    </recommendedName>
    <alternativeName>
        <fullName evidence="2">30S ribosomal protein S20</fullName>
    </alternativeName>
</protein>
<reference key="1">
    <citation type="journal article" date="2001" name="Science">
        <title>Complete genome sequence of a virulent isolate of Streptococcus pneumoniae.</title>
        <authorList>
            <person name="Tettelin H."/>
            <person name="Nelson K.E."/>
            <person name="Paulsen I.T."/>
            <person name="Eisen J.A."/>
            <person name="Read T.D."/>
            <person name="Peterson S.N."/>
            <person name="Heidelberg J.F."/>
            <person name="DeBoy R.T."/>
            <person name="Haft D.H."/>
            <person name="Dodson R.J."/>
            <person name="Durkin A.S."/>
            <person name="Gwinn M.L."/>
            <person name="Kolonay J.F."/>
            <person name="Nelson W.C."/>
            <person name="Peterson J.D."/>
            <person name="Umayam L.A."/>
            <person name="White O."/>
            <person name="Salzberg S.L."/>
            <person name="Lewis M.R."/>
            <person name="Radune D."/>
            <person name="Holtzapple E.K."/>
            <person name="Khouri H.M."/>
            <person name="Wolf A.M."/>
            <person name="Utterback T.R."/>
            <person name="Hansen C.L."/>
            <person name="McDonald L.A."/>
            <person name="Feldblyum T.V."/>
            <person name="Angiuoli S.V."/>
            <person name="Dickinson T."/>
            <person name="Hickey E.K."/>
            <person name="Holt I.E."/>
            <person name="Loftus B.J."/>
            <person name="Yang F."/>
            <person name="Smith H.O."/>
            <person name="Venter J.C."/>
            <person name="Dougherty B.A."/>
            <person name="Morrison D.A."/>
            <person name="Hollingshead S.K."/>
            <person name="Fraser C.M."/>
        </authorList>
    </citation>
    <scope>NUCLEOTIDE SEQUENCE [LARGE SCALE GENOMIC DNA]</scope>
    <source>
        <strain>ATCC BAA-334 / TIGR4</strain>
    </source>
</reference>
<keyword id="KW-1185">Reference proteome</keyword>
<keyword id="KW-0687">Ribonucleoprotein</keyword>
<keyword id="KW-0689">Ribosomal protein</keyword>
<keyword id="KW-0694">RNA-binding</keyword>
<keyword id="KW-0699">rRNA-binding</keyword>
<comment type="function">
    <text evidence="1">Binds directly to 16S ribosomal RNA.</text>
</comment>
<comment type="similarity">
    <text evidence="1">Belongs to the bacterial ribosomal protein bS20 family.</text>
</comment>
<sequence length="78" mass="8554">MANIKSAIKRAELNVKQNEKNSAQKSAMRTAIKAFEANPSEELFRAASSAIDKAETKGLIHKNKASRDKARLSAKLVK</sequence>
<name>RS20_STRPN</name>
<gene>
    <name evidence="1" type="primary">rpsT</name>
    <name type="ordered locus">SP_0838</name>
</gene>